<feature type="chain" id="PRO_0000453088" description="Asnovolin J 5',6'-dehydrogenase nvfM">
    <location>
        <begin position="1"/>
        <end position="327"/>
    </location>
</feature>
<feature type="transmembrane region" description="Helical" evidence="2">
    <location>
        <begin position="9"/>
        <end position="29"/>
    </location>
</feature>
<feature type="active site" description="Proton acceptor" evidence="1">
    <location>
        <position position="130"/>
    </location>
</feature>
<feature type="binding site" evidence="1">
    <location>
        <begin position="13"/>
        <end position="19"/>
    </location>
    <ligand>
        <name>NADP(+)</name>
        <dbReference type="ChEBI" id="CHEBI:58349"/>
    </ligand>
</feature>
<feature type="binding site" evidence="1">
    <location>
        <position position="47"/>
    </location>
    <ligand>
        <name>NADP(+)</name>
        <dbReference type="ChEBI" id="CHEBI:58349"/>
    </ligand>
</feature>
<proteinExistence type="evidence at protein level"/>
<evidence type="ECO:0000250" key="1">
    <source>
        <dbReference type="UniProtKB" id="Q9LD14"/>
    </source>
</evidence>
<evidence type="ECO:0000255" key="2"/>
<evidence type="ECO:0000269" key="3">
    <source>
    </source>
</evidence>
<evidence type="ECO:0000303" key="4">
    <source>
    </source>
</evidence>
<evidence type="ECO:0000305" key="5"/>
<reference key="1">
    <citation type="journal article" date="2018" name="Proc. Natl. Acad. Sci. U.S.A.">
        <title>Linking secondary metabolites to gene clusters through genome sequencing of six diverse Aspergillus species.</title>
        <authorList>
            <person name="Kjaerboelling I."/>
            <person name="Vesth T.C."/>
            <person name="Frisvad J.C."/>
            <person name="Nybo J.L."/>
            <person name="Theobald S."/>
            <person name="Kuo A."/>
            <person name="Bowyer P."/>
            <person name="Matsuda Y."/>
            <person name="Mondo S."/>
            <person name="Lyhne E.K."/>
            <person name="Kogle M.E."/>
            <person name="Clum A."/>
            <person name="Lipzen A."/>
            <person name="Salamov A."/>
            <person name="Ngan C.Y."/>
            <person name="Daum C."/>
            <person name="Chiniquy J."/>
            <person name="Barry K."/>
            <person name="LaButti K."/>
            <person name="Haridas S."/>
            <person name="Simmons B.A."/>
            <person name="Magnuson J.K."/>
            <person name="Mortensen U.H."/>
            <person name="Larsen T.O."/>
            <person name="Grigoriev I.V."/>
            <person name="Baker S.E."/>
            <person name="Andersen M.R."/>
        </authorList>
    </citation>
    <scope>NUCLEOTIDE SEQUENCE [LARGE SCALE GENOMIC DNA]</scope>
    <source>
        <strain>IBT 16806</strain>
    </source>
</reference>
<reference key="2">
    <citation type="journal article" date="2018" name="Nat. Commun.">
        <title>Novofumigatonin biosynthesis involves a non-heme iron-dependent endoperoxide isomerase for orthoester formation.</title>
        <authorList>
            <person name="Matsuda Y."/>
            <person name="Bai T."/>
            <person name="Phippen C.B.W."/>
            <person name="Noedvig C.S."/>
            <person name="Kjaerboelling I."/>
            <person name="Vesth T.C."/>
            <person name="Andersen M.R."/>
            <person name="Mortensen U.H."/>
            <person name="Gotfredsen C.H."/>
            <person name="Abe I."/>
            <person name="Larsen T.O."/>
        </authorList>
    </citation>
    <scope>FUNCTION</scope>
    <scope>DISRUPTION PHENOTYPE</scope>
    <scope>CATALYTIC ACTIVITY</scope>
    <scope>PATHWAY</scope>
</reference>
<dbReference type="EC" id="1.3.99.-" evidence="3"/>
<dbReference type="EMBL" id="MSZS01000014">
    <property type="protein sequence ID" value="PKX88475.1"/>
    <property type="molecule type" value="Genomic_DNA"/>
</dbReference>
<dbReference type="SMR" id="A0A2I1BSW0"/>
<dbReference type="STRING" id="1392255.A0A2I1BSW0"/>
<dbReference type="VEuPathDB" id="FungiDB:P174DRAFT_436150"/>
<dbReference type="OMA" id="AIRHSIF"/>
<dbReference type="OrthoDB" id="419598at2759"/>
<dbReference type="UniPathway" id="UPA00213"/>
<dbReference type="Proteomes" id="UP000234474">
    <property type="component" value="Unassembled WGS sequence"/>
</dbReference>
<dbReference type="GO" id="GO:0016020">
    <property type="term" value="C:membrane"/>
    <property type="evidence" value="ECO:0007669"/>
    <property type="project" value="UniProtKB-SubCell"/>
</dbReference>
<dbReference type="GO" id="GO:0016491">
    <property type="term" value="F:oxidoreductase activity"/>
    <property type="evidence" value="ECO:0000314"/>
    <property type="project" value="UniProt"/>
</dbReference>
<dbReference type="GO" id="GO:0140782">
    <property type="term" value="P:novofumigatonin biosynthetic process"/>
    <property type="evidence" value="ECO:0000314"/>
    <property type="project" value="GO_Central"/>
</dbReference>
<dbReference type="Gene3D" id="3.40.50.720">
    <property type="entry name" value="NAD(P)-binding Rossmann-like Domain"/>
    <property type="match status" value="1"/>
</dbReference>
<dbReference type="Gene3D" id="3.90.25.10">
    <property type="entry name" value="UDP-galactose 4-epimerase, domain 1"/>
    <property type="match status" value="1"/>
</dbReference>
<dbReference type="InterPro" id="IPR036291">
    <property type="entry name" value="NAD(P)-bd_dom_sf"/>
</dbReference>
<dbReference type="InterPro" id="IPR008030">
    <property type="entry name" value="NmrA-like"/>
</dbReference>
<dbReference type="InterPro" id="IPR051609">
    <property type="entry name" value="NmrA/Isoflavone_reductase-like"/>
</dbReference>
<dbReference type="PANTHER" id="PTHR47706:SF9">
    <property type="entry name" value="NMRA-LIKE DOMAIN-CONTAINING PROTEIN-RELATED"/>
    <property type="match status" value="1"/>
</dbReference>
<dbReference type="PANTHER" id="PTHR47706">
    <property type="entry name" value="NMRA-LIKE FAMILY PROTEIN"/>
    <property type="match status" value="1"/>
</dbReference>
<dbReference type="Pfam" id="PF05368">
    <property type="entry name" value="NmrA"/>
    <property type="match status" value="1"/>
</dbReference>
<dbReference type="SUPFAM" id="SSF51735">
    <property type="entry name" value="NAD(P)-binding Rossmann-fold domains"/>
    <property type="match status" value="1"/>
</dbReference>
<accession>A0A2I1BSW0</accession>
<sequence length="327" mass="36157">MAITDTINVAIVGASGVTGGSIVNGLLALTGLTVKITALTRPESLNKPANIQLKERGVQVVAANLRGPLEKLVDLLSSIDVVISAIYWGSLDDEIPLANAAKAAGVKRFVQSAYNIPAAARGVTHLRDKKEVILSHIQQLRLPYTYIDVGWWYHVVLPRVASGRTEHALPFGMPDLPIALDGNIPSGLTHIRDIGRYIARIILDPRTVNKKVFVYNELYTQNQLCDLVERLTGEMPQRRYISEKCVQSWLQEALDELERNPSSDIALGVVSLREVFLASNVHGTNTPEYAKYLGYLDGKELYPDFTFLTYEDYVEEVLDGMHSQTVA</sequence>
<keyword id="KW-0472">Membrane</keyword>
<keyword id="KW-0521">NADP</keyword>
<keyword id="KW-0560">Oxidoreductase</keyword>
<keyword id="KW-1185">Reference proteome</keyword>
<keyword id="KW-0812">Transmembrane</keyword>
<keyword id="KW-1133">Transmembrane helix</keyword>
<name>NVFM_ASPN1</name>
<organism>
    <name type="scientific">Aspergillus novofumigatus (strain IBT 16806)</name>
    <dbReference type="NCBI Taxonomy" id="1392255"/>
    <lineage>
        <taxon>Eukaryota</taxon>
        <taxon>Fungi</taxon>
        <taxon>Dikarya</taxon>
        <taxon>Ascomycota</taxon>
        <taxon>Pezizomycotina</taxon>
        <taxon>Eurotiomycetes</taxon>
        <taxon>Eurotiomycetidae</taxon>
        <taxon>Eurotiales</taxon>
        <taxon>Aspergillaceae</taxon>
        <taxon>Aspergillus</taxon>
        <taxon>Aspergillus subgen. Fumigati</taxon>
    </lineage>
</organism>
<protein>
    <recommendedName>
        <fullName evidence="4">Asnovolin J 5',6'-dehydrogenase nvfM</fullName>
        <ecNumber evidence="3">1.3.99.-</ecNumber>
    </recommendedName>
    <alternativeName>
        <fullName evidence="4">Novofumigatonin biosynthesis cluster protein M</fullName>
    </alternativeName>
</protein>
<comment type="function">
    <text evidence="3">Asnovolin J 5',6'-dehydrogenase; part of the gene cluster that mediates the biosynthesis of novofumigatonin, a heavily oxygenated meroterpenoid containing a unique orthoester moiety (PubMed:29968715). The first step of the pathway is the synthesis of 3,5-dimethylorsellinic acid (DMOA) by the polyketide synthase nvfA via condensation of one acetyl-CoA starter unit with 3 malonyl-CoA units and 2 methylations (PubMed:29968715). DMOA is then converted to farnesyl-DMOA by the farnesyltransferase nvfB (PubMed:29968715). Epoxydation by FAD-dependent monooxygenase nvfK, followed by a protonation-initiated cyclization catalyzed by the terpene cyclase nvfL leads to the production of asnavolin H (PubMed:29968715). The short chain dehydrogenase nvfC then as a 3-OH dehydrogenase of asnovolin H to yield chemesin D (PubMed:29968715). There are two branches to synthesize asnovolin A from chemesin D (PubMed:29968715). In one branch, chemesin D undergoes Baeyer-Villiger oxidation by nvfH, methylation by nvfJ, and enoyl reduction by the nvfM D enoylreductase that reduces the double bond between C-5'and C-6', to form respectively asnovolin I, asnovolin K, and asnovolin A (PubMed:29968715). In the other branch, the methylation precedes the Baeyer-Villiger oxidation and the enoyl reduction to yield asnovolin A via the asnovolin J intermediate (PubMed:29968715). Asnovolin A is further converted to fumigatonoid A by the Fe(II)/2-oxoglutarate-dependent dioxygenase nvfI that catalyzes an endoperoxidation reaction (PubMed:29968715). The alpha/beta hydrolase nvfD then acts as an epimerase that converts fumigatonoid A to its C-5' epimer, which then undergoes spontaneous or nvfD-catalyzed lactonization (PubMed:29968715). The following step utilizes the ketoreductase nvfG to produce fumigatonoid B (PubMed:29968715). The dioxygenase nvfE further converts fumigatonoid B into fumigatonoid C (PubMed:29968715). Finally the Fe(II)/2-oxoglutarate-dependent dioxygenase nvfF catalyzes two rounds of oxidation to transform fumigatonoid C into the end product, novofumigatonin A (PubMed:29968715).</text>
</comment>
<comment type="catalytic activity">
    <reaction evidence="3">
        <text>asnovolin K + AH2 = asnovolin A + A</text>
        <dbReference type="Rhea" id="RHEA:67064"/>
        <dbReference type="ChEBI" id="CHEBI:13193"/>
        <dbReference type="ChEBI" id="CHEBI:17499"/>
        <dbReference type="ChEBI" id="CHEBI:156459"/>
        <dbReference type="ChEBI" id="CHEBI:167685"/>
    </reaction>
    <physiologicalReaction direction="left-to-right" evidence="3">
        <dbReference type="Rhea" id="RHEA:67065"/>
    </physiologicalReaction>
</comment>
<comment type="catalytic activity">
    <reaction evidence="3">
        <text>chermesin D methyl ester + AH2 = asnovolin J + A</text>
        <dbReference type="Rhea" id="RHEA:67068"/>
        <dbReference type="ChEBI" id="CHEBI:13193"/>
        <dbReference type="ChEBI" id="CHEBI:17499"/>
        <dbReference type="ChEBI" id="CHEBI:167683"/>
        <dbReference type="ChEBI" id="CHEBI:167691"/>
    </reaction>
    <physiologicalReaction direction="left-to-right" evidence="3">
        <dbReference type="Rhea" id="RHEA:67069"/>
    </physiologicalReaction>
</comment>
<comment type="pathway">
    <text evidence="3">Secondary metabolite biosynthesis; terpenoid biosynthesis.</text>
</comment>
<comment type="subcellular location">
    <subcellularLocation>
        <location evidence="2">Membrane</location>
        <topology evidence="2">Single-pass membrane protein</topology>
    </subcellularLocation>
</comment>
<comment type="disruption phenotype">
    <text evidence="3">Completely abolishes the production of novofumigatonin and asnovolin A, but accumulates asnovolin I and asnovolin K.</text>
</comment>
<comment type="similarity">
    <text evidence="5">Belongs to the NmrA-type oxidoreductase family.</text>
</comment>
<gene>
    <name evidence="4" type="primary">nvfM</name>
    <name type="ORF">P174DRAFT_436150</name>
</gene>